<accession>B1X7H3</accession>
<keyword id="KW-0997">Cell inner membrane</keyword>
<keyword id="KW-1003">Cell membrane</keyword>
<keyword id="KW-0472">Membrane</keyword>
<keyword id="KW-0812">Transmembrane</keyword>
<keyword id="KW-1133">Transmembrane helix</keyword>
<keyword id="KW-0813">Transport</keyword>
<evidence type="ECO:0000255" key="1">
    <source>
        <dbReference type="HAMAP-Rule" id="MF_01577"/>
    </source>
</evidence>
<sequence>MTDLPDSTRWQLWIVAFGFFMQSLDTTIVNTALPSMAQSLGESPLHMHMVIVSYVLTVAVMLPASGWLADKVGVRNIFFTAIVLFTLGSLFCALSGTLNELLLARALQGVGGAMMVPVGRLTVMKIVPREQYMAAMTFVTLPGQVGPLLGPALGGLLVEYASWHWIFLINIPVGIIGAIATLLLMPNYTMQTRRFDLSGFLLLAVGMAVLTLALDGSKGTGLSPLTIAGLVAVGVVALVLYLLHARNNNRALFSLKLFRTRTFSLGLAGSFAGRIGSGMLPFMTPVFLQIGLGFSPFHAGLMMIPMVLGSMGMKRIVVQVVNRFGYRRVLVATTLGLSLVTLLFMTTALLGWYYVLPFVLFLQGMVNSTRFSSMNTLTLKDLPDNLASSGNSLLSMIMQLSMSIGVTIAGLLLGLFGSQHVSVDSGTTQTVFMYTWLSMALIIALPAFIFARVPNDTHQNVAISRRKRSAQ</sequence>
<reference key="1">
    <citation type="journal article" date="2008" name="J. Bacteriol.">
        <title>The complete genome sequence of Escherichia coli DH10B: insights into the biology of a laboratory workhorse.</title>
        <authorList>
            <person name="Durfee T."/>
            <person name="Nelson R."/>
            <person name="Baldwin S."/>
            <person name="Plunkett G. III"/>
            <person name="Burland V."/>
            <person name="Mau B."/>
            <person name="Petrosino J.F."/>
            <person name="Qin X."/>
            <person name="Muzny D.M."/>
            <person name="Ayele M."/>
            <person name="Gibbs R.A."/>
            <person name="Csorgo B."/>
            <person name="Posfai G."/>
            <person name="Weinstock G.M."/>
            <person name="Blattner F.R."/>
        </authorList>
    </citation>
    <scope>NUCLEOTIDE SEQUENCE [LARGE SCALE GENOMIC DNA]</scope>
    <source>
        <strain>K12 / DH10B</strain>
    </source>
</reference>
<name>MDTD_ECODH</name>
<organism>
    <name type="scientific">Escherichia coli (strain K12 / DH10B)</name>
    <dbReference type="NCBI Taxonomy" id="316385"/>
    <lineage>
        <taxon>Bacteria</taxon>
        <taxon>Pseudomonadati</taxon>
        <taxon>Pseudomonadota</taxon>
        <taxon>Gammaproteobacteria</taxon>
        <taxon>Enterobacterales</taxon>
        <taxon>Enterobacteriaceae</taxon>
        <taxon>Escherichia</taxon>
    </lineage>
</organism>
<dbReference type="EMBL" id="CP000948">
    <property type="protein sequence ID" value="ACB03249.1"/>
    <property type="molecule type" value="Genomic_DNA"/>
</dbReference>
<dbReference type="RefSeq" id="WP_000130850.1">
    <property type="nucleotide sequence ID" value="NC_010473.1"/>
</dbReference>
<dbReference type="SMR" id="B1X7H3"/>
<dbReference type="KEGG" id="ecd:ECDH10B_2229"/>
<dbReference type="HOGENOM" id="CLU_000960_28_0_6"/>
<dbReference type="GO" id="GO:0005886">
    <property type="term" value="C:plasma membrane"/>
    <property type="evidence" value="ECO:0007669"/>
    <property type="project" value="UniProtKB-SubCell"/>
</dbReference>
<dbReference type="GO" id="GO:0022857">
    <property type="term" value="F:transmembrane transporter activity"/>
    <property type="evidence" value="ECO:0007669"/>
    <property type="project" value="UniProtKB-UniRule"/>
</dbReference>
<dbReference type="CDD" id="cd17503">
    <property type="entry name" value="MFS_LmrB_MDR_like"/>
    <property type="match status" value="1"/>
</dbReference>
<dbReference type="FunFam" id="1.20.1250.20:FF:000021">
    <property type="entry name" value="Putative multidrug resistance protein MdtD"/>
    <property type="match status" value="1"/>
</dbReference>
<dbReference type="FunFam" id="1.20.1720.10:FF:000001">
    <property type="entry name" value="Putative multidrug resistance protein MdtD"/>
    <property type="match status" value="1"/>
</dbReference>
<dbReference type="Gene3D" id="1.20.1250.20">
    <property type="entry name" value="MFS general substrate transporter like domains"/>
    <property type="match status" value="1"/>
</dbReference>
<dbReference type="Gene3D" id="1.20.1720.10">
    <property type="entry name" value="Multidrug resistance protein D"/>
    <property type="match status" value="1"/>
</dbReference>
<dbReference type="HAMAP" id="MF_01577">
    <property type="entry name" value="MFS_MdtD"/>
    <property type="match status" value="1"/>
</dbReference>
<dbReference type="InterPro" id="IPR004638">
    <property type="entry name" value="EmrB-like"/>
</dbReference>
<dbReference type="InterPro" id="IPR011701">
    <property type="entry name" value="MFS"/>
</dbReference>
<dbReference type="InterPro" id="IPR020846">
    <property type="entry name" value="MFS_dom"/>
</dbReference>
<dbReference type="InterPro" id="IPR036259">
    <property type="entry name" value="MFS_trans_sf"/>
</dbReference>
<dbReference type="InterPro" id="IPR023721">
    <property type="entry name" value="Multi-R_MdtD"/>
</dbReference>
<dbReference type="NCBIfam" id="TIGR00711">
    <property type="entry name" value="efflux_EmrB"/>
    <property type="match status" value="1"/>
</dbReference>
<dbReference type="NCBIfam" id="NF007799">
    <property type="entry name" value="PRK10504.1"/>
    <property type="match status" value="1"/>
</dbReference>
<dbReference type="PANTHER" id="PTHR42718:SF46">
    <property type="entry name" value="BLR6921 PROTEIN"/>
    <property type="match status" value="1"/>
</dbReference>
<dbReference type="PANTHER" id="PTHR42718">
    <property type="entry name" value="MAJOR FACILITATOR SUPERFAMILY MULTIDRUG TRANSPORTER MFSC"/>
    <property type="match status" value="1"/>
</dbReference>
<dbReference type="Pfam" id="PF07690">
    <property type="entry name" value="MFS_1"/>
    <property type="match status" value="1"/>
</dbReference>
<dbReference type="PRINTS" id="PR01036">
    <property type="entry name" value="TCRTETB"/>
</dbReference>
<dbReference type="SUPFAM" id="SSF103473">
    <property type="entry name" value="MFS general substrate transporter"/>
    <property type="match status" value="1"/>
</dbReference>
<dbReference type="PROSITE" id="PS50850">
    <property type="entry name" value="MFS"/>
    <property type="match status" value="1"/>
</dbReference>
<feature type="chain" id="PRO_0000365278" description="Putative multidrug resistance protein MdtD">
    <location>
        <begin position="1"/>
        <end position="471"/>
    </location>
</feature>
<feature type="topological domain" description="Periplasmic" evidence="1">
    <location>
        <begin position="1"/>
        <end position="11"/>
    </location>
</feature>
<feature type="transmembrane region" description="Helical" evidence="1">
    <location>
        <begin position="12"/>
        <end position="32"/>
    </location>
</feature>
<feature type="topological domain" description="Cytoplasmic" evidence="1">
    <location>
        <begin position="33"/>
        <end position="48"/>
    </location>
</feature>
<feature type="transmembrane region" description="Helical" evidence="1">
    <location>
        <begin position="49"/>
        <end position="69"/>
    </location>
</feature>
<feature type="topological domain" description="Periplasmic" evidence="1">
    <location>
        <begin position="70"/>
        <end position="76"/>
    </location>
</feature>
<feature type="transmembrane region" description="Helical" evidence="1">
    <location>
        <begin position="77"/>
        <end position="97"/>
    </location>
</feature>
<feature type="topological domain" description="Cytoplasmic" evidence="1">
    <location>
        <begin position="98"/>
        <end position="101"/>
    </location>
</feature>
<feature type="transmembrane region" description="Helical" evidence="1">
    <location>
        <begin position="102"/>
        <end position="124"/>
    </location>
</feature>
<feature type="topological domain" description="Periplasmic" evidence="1">
    <location>
        <begin position="125"/>
        <end position="137"/>
    </location>
</feature>
<feature type="transmembrane region" description="Helical" evidence="1">
    <location>
        <begin position="138"/>
        <end position="158"/>
    </location>
</feature>
<feature type="topological domain" description="Cytoplasmic" evidence="1">
    <location>
        <begin position="159"/>
        <end position="164"/>
    </location>
</feature>
<feature type="transmembrane region" description="Helical" evidence="1">
    <location>
        <begin position="165"/>
        <end position="185"/>
    </location>
</feature>
<feature type="topological domain" description="Periplasmic" evidence="1">
    <location>
        <begin position="186"/>
        <end position="196"/>
    </location>
</feature>
<feature type="transmembrane region" description="Helical" evidence="1">
    <location>
        <begin position="197"/>
        <end position="217"/>
    </location>
</feature>
<feature type="topological domain" description="Cytoplasmic" evidence="1">
    <location>
        <begin position="218"/>
        <end position="224"/>
    </location>
</feature>
<feature type="transmembrane region" description="Helical" evidence="1">
    <location>
        <begin position="225"/>
        <end position="245"/>
    </location>
</feature>
<feature type="topological domain" description="Periplasmic" evidence="1">
    <location>
        <begin position="246"/>
        <end position="262"/>
    </location>
</feature>
<feature type="transmembrane region" description="Helical" evidence="1">
    <location>
        <begin position="263"/>
        <end position="283"/>
    </location>
</feature>
<feature type="topological domain" description="Cytoplasmic" evidence="1">
    <location>
        <begin position="284"/>
        <end position="285"/>
    </location>
</feature>
<feature type="transmembrane region" description="Helical" evidence="1">
    <location>
        <begin position="286"/>
        <end position="306"/>
    </location>
</feature>
<feature type="topological domain" description="Periplasmic" evidence="1">
    <location>
        <begin position="307"/>
        <end position="341"/>
    </location>
</feature>
<feature type="transmembrane region" description="Helical" evidence="1">
    <location>
        <begin position="342"/>
        <end position="362"/>
    </location>
</feature>
<feature type="topological domain" description="Cytoplasmic" evidence="1">
    <location>
        <begin position="363"/>
        <end position="395"/>
    </location>
</feature>
<feature type="transmembrane region" description="Helical" evidence="1">
    <location>
        <begin position="396"/>
        <end position="416"/>
    </location>
</feature>
<feature type="topological domain" description="Periplasmic" evidence="1">
    <location>
        <begin position="417"/>
        <end position="430"/>
    </location>
</feature>
<feature type="transmembrane region" description="Helical" evidence="1">
    <location>
        <begin position="431"/>
        <end position="451"/>
    </location>
</feature>
<feature type="topological domain" description="Cytoplasmic" evidence="1">
    <location>
        <begin position="452"/>
        <end position="471"/>
    </location>
</feature>
<gene>
    <name evidence="1" type="primary">mdtD</name>
    <name type="ordered locus">ECDH10B_2229</name>
</gene>
<comment type="subcellular location">
    <subcellularLocation>
        <location evidence="1">Cell inner membrane</location>
        <topology evidence="1">Multi-pass membrane protein</topology>
    </subcellularLocation>
</comment>
<comment type="similarity">
    <text evidence="1">Belongs to the major facilitator superfamily. TCR/Tet family.</text>
</comment>
<proteinExistence type="inferred from homology"/>
<protein>
    <recommendedName>
        <fullName evidence="1">Putative multidrug resistance protein MdtD</fullName>
    </recommendedName>
</protein>